<accession>P23142</accession>
<accession>B0QY42</accession>
<accession>B1AHL4</accession>
<accession>P23143</accession>
<accession>P23144</accession>
<accession>P37888</accession>
<accession>Q5TIC4</accession>
<accession>Q8TBH8</accession>
<accession>Q9HBQ5</accession>
<accession>Q9UC21</accession>
<accession>Q9UGR4</accession>
<accession>Q9UH41</accession>
<keyword id="KW-0025">Alternative splicing</keyword>
<keyword id="KW-0106">Calcium</keyword>
<keyword id="KW-0160">Chromosomal rearrangement</keyword>
<keyword id="KW-0903">Direct protein sequencing</keyword>
<keyword id="KW-1015">Disulfide bond</keyword>
<keyword id="KW-0245">EGF-like domain</keyword>
<keyword id="KW-0272">Extracellular matrix</keyword>
<keyword id="KW-0325">Glycoprotein</keyword>
<keyword id="KW-0945">Host-virus interaction</keyword>
<keyword id="KW-1267">Proteomics identification</keyword>
<keyword id="KW-1185">Reference proteome</keyword>
<keyword id="KW-0677">Repeat</keyword>
<keyword id="KW-0964">Secreted</keyword>
<keyword id="KW-0732">Signal</keyword>
<reference key="1">
    <citation type="journal article" date="1990" name="J. Cell Biol.">
        <title>Fibulin is an extracellular matrix and plasma glycoprotein with repeated domain structure.</title>
        <authorList>
            <person name="Argraves W.S."/>
            <person name="Tran H."/>
            <person name="Burgess W.H."/>
            <person name="Dickerson K."/>
        </authorList>
    </citation>
    <scope>NUCLEOTIDE SEQUENCE [MRNA] (ISOFORMS A; B AND C)</scope>
    <scope>VARIANT ARG-141</scope>
</reference>
<reference key="2">
    <citation type="journal article" date="1997" name="Matrix Biol.">
        <title>Human fibulin-1D: molecular cloning, expression and similarity with S1-5 protein, a new member of the fibulin gene family.</title>
        <authorList>
            <person name="Tran H."/>
            <person name="Mattei M.-G."/>
            <person name="Godyna S."/>
            <person name="Argraves W.S."/>
        </authorList>
    </citation>
    <scope>NUCLEOTIDE SEQUENCE [MRNA] (ISOFORM D)</scope>
    <scope>TISSUE SPECIFICITY</scope>
    <scope>VARIANT ARG-141</scope>
    <scope>INTERACTION WITH FN1 AND FGB</scope>
</reference>
<reference key="3">
    <citation type="journal article" date="1999" name="J. Biol. Chem.">
        <title>Translational control of specific genes during differentiation of HL-60 cells.</title>
        <authorList>
            <person name="Krichevsky A.M."/>
            <person name="Metzer E."/>
            <person name="Rosen H."/>
        </authorList>
    </citation>
    <scope>NUCLEOTIDE SEQUENCE [MRNA] (ISOFORM D)</scope>
    <scope>VARIANTS ARG-141 AND ARG-695</scope>
</reference>
<reference key="4">
    <citation type="journal article" date="2004" name="Proc. Natl. Acad. Sci. U.S.A.">
        <title>Large-scale cDNA transfection screening for genes related to cancer development and progression.</title>
        <authorList>
            <person name="Wan D."/>
            <person name="Gong Y."/>
            <person name="Qin W."/>
            <person name="Zhang P."/>
            <person name="Li J."/>
            <person name="Wei L."/>
            <person name="Zhou X."/>
            <person name="Li H."/>
            <person name="Qiu X."/>
            <person name="Zhong F."/>
            <person name="He L."/>
            <person name="Yu J."/>
            <person name="Yao G."/>
            <person name="Jiang H."/>
            <person name="Qian L."/>
            <person name="Yu Y."/>
            <person name="Shu H."/>
            <person name="Chen X."/>
            <person name="Xu H."/>
            <person name="Guo M."/>
            <person name="Pan Z."/>
            <person name="Chen Y."/>
            <person name="Ge C."/>
            <person name="Yang S."/>
            <person name="Gu J."/>
        </authorList>
    </citation>
    <scope>NUCLEOTIDE SEQUENCE [LARGE SCALE MRNA] (ISOFORM C)</scope>
    <scope>VARIANT ARG-141</scope>
</reference>
<reference key="5">
    <citation type="journal article" date="1999" name="Nature">
        <title>The DNA sequence of human chromosome 22.</title>
        <authorList>
            <person name="Dunham I."/>
            <person name="Hunt A.R."/>
            <person name="Collins J.E."/>
            <person name="Bruskiewich R."/>
            <person name="Beare D.M."/>
            <person name="Clamp M."/>
            <person name="Smink L.J."/>
            <person name="Ainscough R."/>
            <person name="Almeida J.P."/>
            <person name="Babbage A.K."/>
            <person name="Bagguley C."/>
            <person name="Bailey J."/>
            <person name="Barlow K.F."/>
            <person name="Bates K.N."/>
            <person name="Beasley O.P."/>
            <person name="Bird C.P."/>
            <person name="Blakey S.E."/>
            <person name="Bridgeman A.M."/>
            <person name="Buck D."/>
            <person name="Burgess J."/>
            <person name="Burrill W.D."/>
            <person name="Burton J."/>
            <person name="Carder C."/>
            <person name="Carter N.P."/>
            <person name="Chen Y."/>
            <person name="Clark G."/>
            <person name="Clegg S.M."/>
            <person name="Cobley V.E."/>
            <person name="Cole C.G."/>
            <person name="Collier R.E."/>
            <person name="Connor R."/>
            <person name="Conroy D."/>
            <person name="Corby N.R."/>
            <person name="Coville G.J."/>
            <person name="Cox A.V."/>
            <person name="Davis J."/>
            <person name="Dawson E."/>
            <person name="Dhami P.D."/>
            <person name="Dockree C."/>
            <person name="Dodsworth S.J."/>
            <person name="Durbin R.M."/>
            <person name="Ellington A.G."/>
            <person name="Evans K.L."/>
            <person name="Fey J.M."/>
            <person name="Fleming K."/>
            <person name="French L."/>
            <person name="Garner A.A."/>
            <person name="Gilbert J.G.R."/>
            <person name="Goward M.E."/>
            <person name="Grafham D.V."/>
            <person name="Griffiths M.N.D."/>
            <person name="Hall C."/>
            <person name="Hall R.E."/>
            <person name="Hall-Tamlyn G."/>
            <person name="Heathcott R.W."/>
            <person name="Ho S."/>
            <person name="Holmes S."/>
            <person name="Hunt S.E."/>
            <person name="Jones M.C."/>
            <person name="Kershaw J."/>
            <person name="Kimberley A.M."/>
            <person name="King A."/>
            <person name="Laird G.K."/>
            <person name="Langford C.F."/>
            <person name="Leversha M.A."/>
            <person name="Lloyd C."/>
            <person name="Lloyd D.M."/>
            <person name="Martyn I.D."/>
            <person name="Mashreghi-Mohammadi M."/>
            <person name="Matthews L.H."/>
            <person name="Mccann O.T."/>
            <person name="Mcclay J."/>
            <person name="Mclaren S."/>
            <person name="McMurray A.A."/>
            <person name="Milne S.A."/>
            <person name="Mortimore B.J."/>
            <person name="Odell C.N."/>
            <person name="Pavitt R."/>
            <person name="Pearce A.V."/>
            <person name="Pearson D."/>
            <person name="Phillimore B.J.C.T."/>
            <person name="Phillips S.H."/>
            <person name="Plumb R.W."/>
            <person name="Ramsay H."/>
            <person name="Ramsey Y."/>
            <person name="Rogers L."/>
            <person name="Ross M.T."/>
            <person name="Scott C.E."/>
            <person name="Sehra H.K."/>
            <person name="Skuce C.D."/>
            <person name="Smalley S."/>
            <person name="Smith M.L."/>
            <person name="Soderlund C."/>
            <person name="Spragon L."/>
            <person name="Steward C.A."/>
            <person name="Sulston J.E."/>
            <person name="Swann R.M."/>
            <person name="Vaudin M."/>
            <person name="Wall M."/>
            <person name="Wallis J.M."/>
            <person name="Whiteley M.N."/>
            <person name="Willey D.L."/>
            <person name="Williams L."/>
            <person name="Williams S.A."/>
            <person name="Williamson H."/>
            <person name="Wilmer T.E."/>
            <person name="Wilming L."/>
            <person name="Wright C.L."/>
            <person name="Hubbard T."/>
            <person name="Bentley D.R."/>
            <person name="Beck S."/>
            <person name="Rogers J."/>
            <person name="Shimizu N."/>
            <person name="Minoshima S."/>
            <person name="Kawasaki K."/>
            <person name="Sasaki T."/>
            <person name="Asakawa S."/>
            <person name="Kudoh J."/>
            <person name="Shintani A."/>
            <person name="Shibuya K."/>
            <person name="Yoshizaki Y."/>
            <person name="Aoki N."/>
            <person name="Mitsuyama S."/>
            <person name="Roe B.A."/>
            <person name="Chen F."/>
            <person name="Chu L."/>
            <person name="Crabtree J."/>
            <person name="Deschamps S."/>
            <person name="Do A."/>
            <person name="Do T."/>
            <person name="Dorman A."/>
            <person name="Fang F."/>
            <person name="Fu Y."/>
            <person name="Hu P."/>
            <person name="Hua A."/>
            <person name="Kenton S."/>
            <person name="Lai H."/>
            <person name="Lao H.I."/>
            <person name="Lewis J."/>
            <person name="Lewis S."/>
            <person name="Lin S.-P."/>
            <person name="Loh P."/>
            <person name="Malaj E."/>
            <person name="Nguyen T."/>
            <person name="Pan H."/>
            <person name="Phan S."/>
            <person name="Qi S."/>
            <person name="Qian Y."/>
            <person name="Ray L."/>
            <person name="Ren Q."/>
            <person name="Shaull S."/>
            <person name="Sloan D."/>
            <person name="Song L."/>
            <person name="Wang Q."/>
            <person name="Wang Y."/>
            <person name="Wang Z."/>
            <person name="White J."/>
            <person name="Willingham D."/>
            <person name="Wu H."/>
            <person name="Yao Z."/>
            <person name="Zhan M."/>
            <person name="Zhang G."/>
            <person name="Chissoe S."/>
            <person name="Murray J."/>
            <person name="Miller N."/>
            <person name="Minx P."/>
            <person name="Fulton R."/>
            <person name="Johnson D."/>
            <person name="Bemis G."/>
            <person name="Bentley D."/>
            <person name="Bradshaw H."/>
            <person name="Bourne S."/>
            <person name="Cordes M."/>
            <person name="Du Z."/>
            <person name="Fulton L."/>
            <person name="Goela D."/>
            <person name="Graves T."/>
            <person name="Hawkins J."/>
            <person name="Hinds K."/>
            <person name="Kemp K."/>
            <person name="Latreille P."/>
            <person name="Layman D."/>
            <person name="Ozersky P."/>
            <person name="Rohlfing T."/>
            <person name="Scheet P."/>
            <person name="Walker C."/>
            <person name="Wamsley A."/>
            <person name="Wohldmann P."/>
            <person name="Pepin K."/>
            <person name="Nelson J."/>
            <person name="Korf I."/>
            <person name="Bedell J.A."/>
            <person name="Hillier L.W."/>
            <person name="Mardis E."/>
            <person name="Waterston R."/>
            <person name="Wilson R."/>
            <person name="Emanuel B.S."/>
            <person name="Shaikh T."/>
            <person name="Kurahashi H."/>
            <person name="Saitta S."/>
            <person name="Budarf M.L."/>
            <person name="McDermid H.E."/>
            <person name="Johnson A."/>
            <person name="Wong A.C.C."/>
            <person name="Morrow B.E."/>
            <person name="Edelmann L."/>
            <person name="Kim U.J."/>
            <person name="Shizuya H."/>
            <person name="Simon M.I."/>
            <person name="Dumanski J.P."/>
            <person name="Peyrard M."/>
            <person name="Kedra D."/>
            <person name="Seroussi E."/>
            <person name="Fransson I."/>
            <person name="Tapia I."/>
            <person name="Bruder C.E."/>
            <person name="O'Brien K.P."/>
            <person name="Wilkinson P."/>
            <person name="Bodenteich A."/>
            <person name="Hartman K."/>
            <person name="Hu X."/>
            <person name="Khan A.S."/>
            <person name="Lane L."/>
            <person name="Tilahun Y."/>
            <person name="Wright H."/>
        </authorList>
    </citation>
    <scope>NUCLEOTIDE SEQUENCE [LARGE SCALE GENOMIC DNA]</scope>
</reference>
<reference key="6">
    <citation type="journal article" date="2004" name="Genome Res.">
        <title>The status, quality, and expansion of the NIH full-length cDNA project: the Mammalian Gene Collection (MGC).</title>
        <authorList>
            <consortium name="The MGC Project Team"/>
        </authorList>
    </citation>
    <scope>NUCLEOTIDE SEQUENCE [LARGE SCALE MRNA] (ISOFORM C)</scope>
    <scope>VARIANT ARG-141</scope>
    <source>
        <tissue>Brain</tissue>
    </source>
</reference>
<reference key="7">
    <citation type="journal article" date="2002" name="Biochem. J.">
        <title>Structural and functional characterization of the human and mouse fibulin-1 gene promoters: role of Sp1 and Sp3.</title>
        <authorList>
            <person name="Castoldi M."/>
            <person name="Chu M.-L."/>
        </authorList>
    </citation>
    <scope>NUCLEOTIDE SEQUENCE [GENOMIC DNA] OF 1-26</scope>
</reference>
<reference key="8">
    <citation type="journal article" date="1989" name="Cell">
        <title>Fibulin, a novel protein that interacts with the fibronectin receptor beta subunit cytoplasmic domain.</title>
        <authorList>
            <person name="Argraves W.S."/>
            <person name="Dickerson K."/>
            <person name="Burgess W.H."/>
            <person name="Ruoslahti E."/>
        </authorList>
    </citation>
    <scope>PROTEIN SEQUENCE OF 30-44</scope>
</reference>
<reference key="9">
    <citation type="journal article" date="1992" name="J. Biol. Chem.">
        <title>Fibulin binds to itself and to the carboxyl-terminal heparin-binding region of fibronectin.</title>
        <authorList>
            <person name="Balbona K."/>
            <person name="Tran H."/>
            <person name="Godyna S."/>
            <person name="Ingham K.C."/>
            <person name="Strickland D.K."/>
            <person name="Argraves W.S."/>
        </authorList>
    </citation>
    <scope>SELF-ASSOCIATION</scope>
    <scope>INTERACTION WITH FN1</scope>
</reference>
<reference key="10">
    <citation type="journal article" date="1995" name="J. Histochem. Cytochem.">
        <title>The association of human fibulin-1 with elastic fibers: an immunohistological, ultrastructural, and RNA study.</title>
        <authorList>
            <person name="Roark E.F."/>
            <person name="Keene D.R."/>
            <person name="Haudenschild C.C."/>
            <person name="Godyna S."/>
            <person name="Little C.D."/>
            <person name="Argraves W.S."/>
        </authorList>
    </citation>
    <scope>POSSIBLE FUNCTION</scope>
</reference>
<reference key="11">
    <citation type="journal article" date="1995" name="J. Biol. Chem.">
        <title>The interaction of fibulin-1 with fibrinogen. A potential role in hemostasis and thrombosis.</title>
        <authorList>
            <person name="Tran H."/>
            <person name="Tanaka A."/>
            <person name="Litvinovich S.V."/>
            <person name="Medved L.V."/>
            <person name="Haudenschild C.C."/>
            <person name="Argraves W.S."/>
        </authorList>
    </citation>
    <scope>INTERACTION WITH FGB</scope>
</reference>
<reference key="12">
    <citation type="journal article" date="1996" name="Histochem. J.">
        <title>The extracellular matrix proteins fibulin-1 and fibulin-2 in the early human embryo.</title>
        <authorList>
            <person name="Miosge N."/>
            <person name="Gotz W."/>
            <person name="Sasaki T."/>
            <person name="Chu M.-L."/>
            <person name="Timpl R."/>
            <person name="Herken R."/>
        </authorList>
    </citation>
    <scope>DEVELOPMENTAL STAGE</scope>
</reference>
<reference key="13">
    <citation type="journal article" date="1996" name="Proc. Natl. Acad. Sci. U.S.A.">
        <title>Estrogens increase the expression of fibulin-1, an extracellular matrix protein secreted by human ovarian cancer cells.</title>
        <authorList>
            <person name="Clinton G.M."/>
            <person name="Rougeot C."/>
            <person name="Derancourt J."/>
            <person name="Roger P."/>
            <person name="Defrenne A."/>
            <person name="Godyna S."/>
            <person name="Argraves W.S."/>
            <person name="Rochefort H."/>
        </authorList>
    </citation>
    <scope>INDUCTION</scope>
</reference>
<reference key="14">
    <citation type="journal article" date="1997" name="J. Biol. Chem.">
        <title>The self-association and fibronectin-binding sites of fibulin-1 map to calcium-binding epidermal growth factor-like domains.</title>
        <authorList>
            <person name="Tran H."/>
            <person name="VanDusen W.J."/>
            <person name="Argraves W.S."/>
        </authorList>
    </citation>
    <scope>CALCIUM-BINDING</scope>
    <scope>SELF-ASSOCIATION</scope>
    <scope>FN1-BINDING SITES</scope>
</reference>
<reference key="15">
    <citation type="journal article" date="1997" name="Oncogene">
        <title>Suppression of anchorage-independent growth and matrigel invasion and delayed tumor formation by elevated expression of fibulin-1D in human fibrosarcoma-derived cell lines.</title>
        <authorList>
            <person name="Qing J."/>
            <person name="Maher V.M."/>
            <person name="Tran H."/>
            <person name="Argraves W.S."/>
            <person name="Dunstan R.W."/>
            <person name="McCormick J.J."/>
        </authorList>
    </citation>
    <scope>ROLE IN TUMOR FORMATION AND INVASION</scope>
</reference>
<reference key="16">
    <citation type="journal article" date="1998" name="Am. J. Pathol.">
        <title>Increased immunostaining of fibulin-1, an estrogen-regulated protein in the stroma of human ovarian epithelial tumors.</title>
        <authorList>
            <person name="Roger P."/>
            <person name="Pujol P."/>
            <person name="Lucas A."/>
            <person name="Baldet P."/>
            <person name="Rochefort H."/>
        </authorList>
    </citation>
    <scope>INDUCTION</scope>
</reference>
<reference key="17">
    <citation type="journal article" date="1998" name="Int. J. Cancer">
        <title>Estradiol and fibulin-1 inhibit motility of human ovarian- and breast-cancer cells induced by fibronectin.</title>
        <authorList>
            <person name="Hayashido Y."/>
            <person name="Lucas A."/>
            <person name="Rougeot C."/>
            <person name="Godyna S."/>
            <person name="Argraves W.S."/>
            <person name="Rochefort H."/>
        </authorList>
    </citation>
    <scope>ROLE IN TUMOR FORMATION AND INVASION</scope>
</reference>
<reference key="18">
    <citation type="journal article" date="1999" name="Proc. Natl. Acad. Sci. U.S.A.">
        <title>The C-terminal domain of the regulatory protein NOVH is sufficient to promote interaction with fibulin 1C: a clue for a role of NOVH in cell-adhesion signaling.</title>
        <authorList>
            <person name="Perbal B."/>
            <person name="Martinerie C."/>
            <person name="Sainson R."/>
            <person name="Werner M."/>
            <person name="He B."/>
            <person name="Roizman B."/>
        </authorList>
    </citation>
    <scope>INTERACTION WITH CCN3</scope>
</reference>
<reference key="19">
    <citation type="journal article" date="2001" name="J. Cell Sci.">
        <title>Fibulin-1 suppression of fibronectin-regulated cell adhesion and motility.</title>
        <authorList>
            <person name="Twal W.O."/>
            <person name="Czirok A."/>
            <person name="Hegedus B."/>
            <person name="Knaak C."/>
            <person name="Chintalapudi M.R."/>
            <person name="Okagawa H."/>
            <person name="Sugi Y."/>
            <person name="Argraves W.S."/>
        </authorList>
    </citation>
    <scope>ROLE IN CELL ADHESION AND MOTILITY</scope>
</reference>
<reference key="20">
    <citation type="journal article" date="2001" name="J. Neurochem.">
        <title>Fibulin-1 binds the amino-terminal head of beta-amyloid precursor protein and modulates its physiological function.</title>
        <authorList>
            <person name="Ohsawa I."/>
            <person name="Takamura C."/>
            <person name="Kohsaka S."/>
        </authorList>
    </citation>
    <scope>INTERACTION WITH APP</scope>
</reference>
<reference key="21">
    <citation type="journal article" date="2002" name="Biochem. Biophys. Res. Commun.">
        <title>Interaction of oncogenic papillomavirus E6 proteins with fibulin-1.</title>
        <authorList>
            <person name="Du M."/>
            <person name="Fan X."/>
            <person name="Hong E."/>
            <person name="Chen J.J."/>
        </authorList>
    </citation>
    <scope>INTERACTION WITH HIGH-RISK HUMAN PAPILLOMAVIRUSES E6 PROTEIN (MICROBIAL INFECTION)</scope>
    <scope>INHIBITION OF E6-MEDIATED TRANSFORMATION</scope>
</reference>
<reference key="22">
    <citation type="journal article" date="2002" name="J. Med. Genet.">
        <title>The fibulin-1 gene (FBLN1) is disrupted in a t(12;22) associated with a complex type of synpolydactyly.</title>
        <authorList>
            <person name="Debeer P."/>
            <person name="Schoenmakers E.F.P.M."/>
            <person name="Twal W.O."/>
            <person name="Argraves W.S."/>
            <person name="De Smet L."/>
            <person name="Fryns J.-P."/>
            <person name="Van De Ven W.J.M."/>
        </authorList>
    </citation>
    <scope>CHROMOSOMAL TRANSLOCATION WITH RASSF8</scope>
</reference>
<reference key="23">
    <citation type="journal article" date="2002" name="Oncogene">
        <title>Estrogen induction and overexpression of fibulin-1C mRNA in ovarian cancer cells.</title>
        <authorList>
            <person name="Moll F."/>
            <person name="Katsaros D."/>
            <person name="Lazennec G."/>
            <person name="Hellio N."/>
            <person name="Roger P."/>
            <person name="Giacalone P.-L."/>
            <person name="Chalbos D."/>
            <person name="Maudelonde T."/>
            <person name="Rochefort H."/>
            <person name="Pujol P."/>
        </authorList>
    </citation>
    <scope>INDUCTION</scope>
</reference>
<reference key="24">
    <citation type="journal article" date="2003" name="Br. J. Cancer">
        <title>Elevated expression and altered processing of fibulin-1 protein in human breast cancer.</title>
        <authorList>
            <person name="Greene L.M."/>
            <person name="Twal W.O."/>
            <person name="Duffy M.J."/>
            <person name="McDermott E.W."/>
            <person name="Hill A.D."/>
            <person name="O'Higgins N.J."/>
            <person name="McCann A.H."/>
            <person name="Dervan P.A."/>
            <person name="Argraves W.S."/>
            <person name="Gallagher W.M."/>
        </authorList>
    </citation>
    <scope>ASSOCIATION WITH BREAST CANCER</scope>
</reference>
<reference key="25">
    <citation type="journal article" date="2009" name="Mol. Cell. Proteomics">
        <title>A strategy for precise and large scale identification of core fucosylated glycoproteins.</title>
        <authorList>
            <person name="Jia W."/>
            <person name="Lu Z."/>
            <person name="Fu Y."/>
            <person name="Wang H.P."/>
            <person name="Wang L.H."/>
            <person name="Chi H."/>
            <person name="Yuan Z.F."/>
            <person name="Zheng Z.B."/>
            <person name="Song L.N."/>
            <person name="Han H.H."/>
            <person name="Liang Y.M."/>
            <person name="Wang J.L."/>
            <person name="Cai Y."/>
            <person name="Zhang Y.K."/>
            <person name="Deng Y.L."/>
            <person name="Ying W.T."/>
            <person name="He S.M."/>
            <person name="Qian X.H."/>
        </authorList>
    </citation>
    <scope>GLYCOSYLATION AT ASN-98</scope>
</reference>
<reference key="26">
    <citation type="journal article" date="2014" name="J. Proteomics">
        <title>An enzyme assisted RP-RPLC approach for in-depth analysis of human liver phosphoproteome.</title>
        <authorList>
            <person name="Bian Y."/>
            <person name="Song C."/>
            <person name="Cheng K."/>
            <person name="Dong M."/>
            <person name="Wang F."/>
            <person name="Huang J."/>
            <person name="Sun D."/>
            <person name="Wang L."/>
            <person name="Ye M."/>
            <person name="Zou H."/>
        </authorList>
    </citation>
    <scope>IDENTIFICATION BY MASS SPECTROMETRY [LARGE SCALE ANALYSIS]</scope>
    <source>
        <tissue>Liver</tissue>
    </source>
</reference>
<reference key="27">
    <citation type="journal article" date="2014" name="Eur. J. Hum. Genet.">
        <title>Mutation of fibulin-1 causes a novel syndrome involving the central nervous system and connective tissues.</title>
        <authorList>
            <person name="Bohlega S."/>
            <person name="Al-Ajlan H."/>
            <person name="Al-Saif A."/>
        </authorList>
    </citation>
    <scope>VARIANT PHE-397</scope>
</reference>
<name>FBLN1_HUMAN</name>
<organism>
    <name type="scientific">Homo sapiens</name>
    <name type="common">Human</name>
    <dbReference type="NCBI Taxonomy" id="9606"/>
    <lineage>
        <taxon>Eukaryota</taxon>
        <taxon>Metazoa</taxon>
        <taxon>Chordata</taxon>
        <taxon>Craniata</taxon>
        <taxon>Vertebrata</taxon>
        <taxon>Euteleostomi</taxon>
        <taxon>Mammalia</taxon>
        <taxon>Eutheria</taxon>
        <taxon>Euarchontoglires</taxon>
        <taxon>Primates</taxon>
        <taxon>Haplorrhini</taxon>
        <taxon>Catarrhini</taxon>
        <taxon>Hominidae</taxon>
        <taxon>Homo</taxon>
    </lineage>
</organism>
<sequence length="703" mass="77214">MERAAPSRRVPLPLLLLGGLALLAAGVDADVLLEACCADGHRMATHQKDCSLPYATESKECRMVQEQCCHSQLEELHCATGISLANEQDRCATPHGDNASLEATFVKRCCHCCLLGRAAQAQGQSCEYSLMVGYQCGQVFQACCVKSQETGDLDVGGLQETDKIIEVEEEQEDPYLNDRCRGGGPCKQQCRDTGDEVVCSCFVGYQLLSDGVSCEDVNECITGSHSCRLGESCINTVGSFRCQRDSSCGTGYELTEDNSCKDIDECESGIHNCLPDFICQNTLGSFRCRPKLQCKSGFIQDALGNCIDINECLSISAPCPIGHTCINTEGSYTCQKNVPNCGRGYHLNEEGTRCVDVDECAPPAEPCGKGHRCVNSPGSFRCECKTGYYFDGISRMCVDVNECQRYPGRLCGHKCENTLGSYLCSCSVGFRLSVDGRSCEDINECSSSPCSQECANVYGSYQCYCRRGYQLSDVDGVTCEDIDECALPTGGHICSYRCINIPGSFQCSCPSSGYRLAPNGRNCQDIDECVTGIHNCSINETCFNIQGGFRCLAFECPENYRRSAATLQQEKTDTVRCIKSCRPNDVTCVFDPVHTISHTVISLPTFREFTRPEEIIFLRAITPPHPASQANIIFDITEGNLRDSFDIIKRYMDGMTVGVVRQVRPIVGPFHAVLKLEMNYVVGGVVSHRNVVNVHIFVSEYWF</sequence>
<evidence type="ECO:0000250" key="1"/>
<evidence type="ECO:0000255" key="2"/>
<evidence type="ECO:0000255" key="3">
    <source>
        <dbReference type="PROSITE-ProRule" id="PRU00022"/>
    </source>
</evidence>
<evidence type="ECO:0000255" key="4">
    <source>
        <dbReference type="PROSITE-ProRule" id="PRU00076"/>
    </source>
</evidence>
<evidence type="ECO:0000269" key="5">
    <source>
    </source>
</evidence>
<evidence type="ECO:0000269" key="6">
    <source>
    </source>
</evidence>
<evidence type="ECO:0000269" key="7">
    <source>
    </source>
</evidence>
<evidence type="ECO:0000269" key="8">
    <source>
    </source>
</evidence>
<evidence type="ECO:0000269" key="9">
    <source>
    </source>
</evidence>
<evidence type="ECO:0000269" key="10">
    <source>
    </source>
</evidence>
<evidence type="ECO:0000269" key="11">
    <source>
    </source>
</evidence>
<evidence type="ECO:0000269" key="12">
    <source>
    </source>
</evidence>
<evidence type="ECO:0000269" key="13">
    <source>
    </source>
</evidence>
<evidence type="ECO:0000269" key="14">
    <source>
    </source>
</evidence>
<evidence type="ECO:0000269" key="15">
    <source>
    </source>
</evidence>
<evidence type="ECO:0000269" key="16">
    <source>
    </source>
</evidence>
<evidence type="ECO:0000269" key="17">
    <source>
    </source>
</evidence>
<evidence type="ECO:0000269" key="18">
    <source>
    </source>
</evidence>
<evidence type="ECO:0000269" key="19">
    <source>
    </source>
</evidence>
<evidence type="ECO:0000269" key="20">
    <source>
    </source>
</evidence>
<evidence type="ECO:0000269" key="21">
    <source>
    </source>
</evidence>
<evidence type="ECO:0000269" key="22">
    <source>
    </source>
</evidence>
<evidence type="ECO:0000269" key="23">
    <source>
    </source>
</evidence>
<evidence type="ECO:0000303" key="24">
    <source>
    </source>
</evidence>
<evidence type="ECO:0000303" key="25">
    <source>
    </source>
</evidence>
<evidence type="ECO:0000303" key="26">
    <source>
    </source>
</evidence>
<evidence type="ECO:0000305" key="27"/>
<proteinExistence type="evidence at protein level"/>
<feature type="signal peptide" evidence="16">
    <location>
        <begin position="1"/>
        <end position="29"/>
    </location>
</feature>
<feature type="chain" id="PRO_0000007563" description="Fibulin-1">
    <location>
        <begin position="30"/>
        <end position="703"/>
    </location>
</feature>
<feature type="domain" description="Anaphylatoxin-like 1" evidence="3">
    <location>
        <begin position="36"/>
        <end position="76"/>
    </location>
</feature>
<feature type="domain" description="Anaphylatoxin-like 2" evidence="3">
    <location>
        <begin position="77"/>
        <end position="111"/>
    </location>
</feature>
<feature type="domain" description="Anaphylatoxin-like 3" evidence="3">
    <location>
        <begin position="112"/>
        <end position="144"/>
    </location>
</feature>
<feature type="domain" description="EGF-like 1" evidence="4">
    <location>
        <begin position="176"/>
        <end position="215"/>
    </location>
</feature>
<feature type="domain" description="EGF-like 2; calcium-binding" evidence="4">
    <location>
        <begin position="216"/>
        <end position="261"/>
    </location>
</feature>
<feature type="domain" description="EGF-like 3; calcium-binding" evidence="4">
    <location>
        <begin position="262"/>
        <end position="307"/>
    </location>
</feature>
<feature type="domain" description="EGF-like 4; calcium-binding" evidence="4">
    <location>
        <begin position="308"/>
        <end position="355"/>
    </location>
</feature>
<feature type="domain" description="EGF-like 5; calcium-binding" evidence="4">
    <location>
        <begin position="356"/>
        <end position="398"/>
    </location>
</feature>
<feature type="domain" description="EGF-like 6; calcium-binding" evidence="4">
    <location>
        <begin position="399"/>
        <end position="440"/>
    </location>
</feature>
<feature type="domain" description="EGF-like 7; calcium-binding" evidence="4">
    <location>
        <begin position="441"/>
        <end position="480"/>
    </location>
</feature>
<feature type="domain" description="EGF-like 8; calcium-binding" evidence="4">
    <location>
        <begin position="481"/>
        <end position="524"/>
    </location>
</feature>
<feature type="domain" description="EGF-like 9; calcium-binding" evidence="4">
    <location>
        <begin position="525"/>
        <end position="578"/>
    </location>
</feature>
<feature type="region of interest" description="Self-association and FN1-binding; calcium is necessary for homotypic binding, but not for heterotypic binding">
    <location>
        <begin position="356"/>
        <end position="440"/>
    </location>
</feature>
<feature type="glycosylation site" description="N-linked (GlcNAc...) (complex) asparagine" evidence="13">
    <location>
        <position position="98"/>
    </location>
</feature>
<feature type="glycosylation site" description="N-linked (GlcNAc...) asparagine" evidence="2">
    <location>
        <position position="535"/>
    </location>
</feature>
<feature type="glycosylation site" description="N-linked (GlcNAc...) asparagine" evidence="2">
    <location>
        <position position="539"/>
    </location>
</feature>
<feature type="disulfide bond" evidence="1">
    <location>
        <begin position="36"/>
        <end position="61"/>
    </location>
</feature>
<feature type="disulfide bond" evidence="1">
    <location>
        <begin position="37"/>
        <end position="68"/>
    </location>
</feature>
<feature type="disulfide bond" evidence="1">
    <location>
        <begin position="50"/>
        <end position="69"/>
    </location>
</feature>
<feature type="disulfide bond" evidence="1">
    <location>
        <begin position="78"/>
        <end position="109"/>
    </location>
</feature>
<feature type="disulfide bond" evidence="1">
    <location>
        <begin position="91"/>
        <end position="110"/>
    </location>
</feature>
<feature type="disulfide bond" evidence="1">
    <location>
        <begin position="112"/>
        <end position="136"/>
    </location>
</feature>
<feature type="disulfide bond" evidence="1">
    <location>
        <begin position="113"/>
        <end position="143"/>
    </location>
</feature>
<feature type="disulfide bond" evidence="1">
    <location>
        <begin position="126"/>
        <end position="144"/>
    </location>
</feature>
<feature type="disulfide bond" evidence="1">
    <location>
        <begin position="180"/>
        <end position="190"/>
    </location>
</feature>
<feature type="disulfide bond" evidence="1">
    <location>
        <begin position="186"/>
        <end position="199"/>
    </location>
</feature>
<feature type="disulfide bond" evidence="1">
    <location>
        <begin position="201"/>
        <end position="214"/>
    </location>
</feature>
<feature type="disulfide bond" evidence="1">
    <location>
        <begin position="220"/>
        <end position="233"/>
    </location>
</feature>
<feature type="disulfide bond" evidence="1">
    <location>
        <begin position="227"/>
        <end position="242"/>
    </location>
</feature>
<feature type="disulfide bond" evidence="1">
    <location>
        <begin position="248"/>
        <end position="260"/>
    </location>
</feature>
<feature type="disulfide bond" evidence="1">
    <location>
        <begin position="266"/>
        <end position="279"/>
    </location>
</feature>
<feature type="disulfide bond" evidence="1">
    <location>
        <begin position="273"/>
        <end position="288"/>
    </location>
</feature>
<feature type="disulfide bond" evidence="1">
    <location>
        <begin position="294"/>
        <end position="306"/>
    </location>
</feature>
<feature type="disulfide bond" evidence="1">
    <location>
        <begin position="312"/>
        <end position="325"/>
    </location>
</feature>
<feature type="disulfide bond" evidence="1">
    <location>
        <begin position="319"/>
        <end position="334"/>
    </location>
</feature>
<feature type="disulfide bond" evidence="1">
    <location>
        <begin position="341"/>
        <end position="354"/>
    </location>
</feature>
<feature type="disulfide bond" evidence="1">
    <location>
        <begin position="360"/>
        <end position="373"/>
    </location>
</feature>
<feature type="disulfide bond" evidence="1">
    <location>
        <begin position="367"/>
        <end position="382"/>
    </location>
</feature>
<feature type="disulfide bond" evidence="1">
    <location>
        <begin position="384"/>
        <end position="397"/>
    </location>
</feature>
<feature type="disulfide bond" evidence="1">
    <location>
        <begin position="403"/>
        <end position="415"/>
    </location>
</feature>
<feature type="disulfide bond" evidence="1">
    <location>
        <begin position="411"/>
        <end position="424"/>
    </location>
</feature>
<feature type="disulfide bond" evidence="1">
    <location>
        <begin position="426"/>
        <end position="439"/>
    </location>
</feature>
<feature type="disulfide bond" evidence="1">
    <location>
        <begin position="445"/>
        <end position="454"/>
    </location>
</feature>
<feature type="disulfide bond" evidence="1">
    <location>
        <begin position="450"/>
        <end position="463"/>
    </location>
</feature>
<feature type="disulfide bond" evidence="1">
    <location>
        <begin position="465"/>
        <end position="479"/>
    </location>
</feature>
<feature type="disulfide bond" evidence="1">
    <location>
        <begin position="485"/>
        <end position="498"/>
    </location>
</feature>
<feature type="disulfide bond" evidence="1">
    <location>
        <begin position="494"/>
        <end position="507"/>
    </location>
</feature>
<feature type="disulfide bond" evidence="1">
    <location>
        <begin position="509"/>
        <end position="523"/>
    </location>
</feature>
<feature type="disulfide bond" evidence="1">
    <location>
        <begin position="529"/>
        <end position="542"/>
    </location>
</feature>
<feature type="disulfide bond" evidence="1">
    <location>
        <begin position="536"/>
        <end position="551"/>
    </location>
</feature>
<feature type="disulfide bond" evidence="1">
    <location>
        <begin position="556"/>
        <end position="577"/>
    </location>
</feature>
<feature type="splice variant" id="VSP_001383" description="In isoform A." evidence="26">
    <location>
        <begin position="567"/>
        <end position="703"/>
    </location>
</feature>
<feature type="splice variant" id="VSP_001384" description="In isoform B." evidence="26">
    <original>LQQEKTDTVRCIKSCRPNDVTCVFDPVHTISHTVISLPTFREFTRPEEIIFLRAITPPHPASQANIIFDITEGNLRDSFDIIKRYMDGMTVGVVRQVRPIVGPFHAVLKLEMNYVVGGVVSHRNVVNVHIFVSEYWF</original>
    <variation>QKSKKGRQNTPAGSSKEDCRVLPWKQGLEDTHLDA</variation>
    <location>
        <begin position="567"/>
        <end position="703"/>
    </location>
</feature>
<feature type="splice variant" id="VSP_001385" description="In isoform C." evidence="24 25 26">
    <original>LQQEKTDTVRCIKSCRPNDVTCVFDPVHTISHTVISLPTFREFTRPEEIIFLRAITPPHPASQANIIFDITEGNLRDSFDIIKRYMDGMTVGVVRQVRPIVGPFHAVLKLEMNYVVGGVVSHRNVVNVHIFVSEYWF</original>
    <variation>RCERLPCHENRECSKLPLRITYYHLSFPTNIQAPAVVFRMGPSSAVPGDSMQLAITGGNEEGFFTTRKVSPHSGVVALTKPVPEPRDLLLTVKMDLSRHGTVSSFVAKLFIFVSAEL</variation>
    <location>
        <begin position="567"/>
        <end position="703"/>
    </location>
</feature>
<feature type="sequence variant" id="VAR_015650" description="In dbSNP:rs136730." evidence="5 11 12 14 19">
    <original>Q</original>
    <variation>R</variation>
    <location>
        <position position="141"/>
    </location>
</feature>
<feature type="sequence variant" id="VAR_072739" description="Found in a family with syndactyly, undescended testes, delayed motor milestones, intellectual disability and signs of brain atrophy; uncertain significance; dbSNP:rs397509432." evidence="15">
    <original>C</original>
    <variation>F</variation>
    <location>
        <position position="397"/>
    </location>
</feature>
<feature type="sequence variant" id="VAR_055720" description="In dbSNP:rs1802787.">
    <original>C</original>
    <variation>S</variation>
    <location>
        <position position="509"/>
    </location>
</feature>
<feature type="sequence variant" id="VAR_055721" description="In dbSNP:rs13268." evidence="5">
    <original>H</original>
    <variation>R</variation>
    <location>
        <position position="695"/>
    </location>
</feature>
<feature type="sequence conflict" description="In Ref. 6; AAH22497." evidence="27" ref="6">
    <original>P</original>
    <variation>Q</variation>
    <location>
        <position position="13"/>
    </location>
</feature>
<feature type="sequence conflict" description="In Ref. 8; AA sequence." evidence="27" ref="8">
    <original>C</original>
    <variation>S</variation>
    <location>
        <position position="36"/>
    </location>
</feature>
<feature type="sequence conflict" description="In Ref. 8; AA sequence." evidence="27" ref="8">
    <original>HR</original>
    <variation>SH</variation>
    <location>
        <begin position="41"/>
        <end position="42"/>
    </location>
</feature>
<feature type="sequence conflict" description="In Ref. 6; AAH22497." evidence="27" ref="6">
    <original>R</original>
    <variation>S</variation>
    <location>
        <position position="521"/>
    </location>
</feature>
<feature type="sequence conflict" description="In Ref. 1; CAA37770/CAA37771/CAA37772, 2; AAB17099 and 3; AAK37822." evidence="27" ref="1 2 3">
    <original>G</original>
    <variation>A</variation>
    <location>
        <position position="548"/>
    </location>
</feature>
<feature type="sequence conflict" description="In Ref. 4; AAG17241." evidence="27" ref="4">
    <original>E</original>
    <variation>K</variation>
    <location sequence="P23142-4">
        <position position="650"/>
    </location>
</feature>
<feature type="sequence conflict" description="In Ref. 4; AAG17241." evidence="27" ref="4">
    <original>L</original>
    <variation>F</variation>
    <location sequence="P23142-4">
        <position position="662"/>
    </location>
</feature>
<feature type="sequence conflict" description="In Ref. 4; AAG17241." evidence="27" ref="4">
    <original>SAE</original>
    <variation>FAK</variation>
    <location sequence="P23142-4">
        <begin position="680"/>
        <end position="682"/>
    </location>
</feature>
<protein>
    <recommendedName>
        <fullName>Fibulin-1</fullName>
        <shortName>FIBL-1</shortName>
    </recommendedName>
</protein>
<gene>
    <name type="primary">FBLN1</name>
    <name type="ORF">PP213</name>
</gene>
<comment type="function">
    <text evidence="6 20 21">Incorporated into fibronectin-containing matrix fibers. May play a role in cell adhesion and migration along protein fibers within the extracellular matrix (ECM). Could be important for certain developmental processes and contribute to the supramolecular organization of ECM architecture, in particular to those of basement membranes. Has been implicated in a role in cellular transformation and tumor invasion, it appears to be a tumor suppressor. May play a role in haemostasis and thrombosis owing to its ability to bind fibrinogen and incorporate into clots. Could play a significant role in modulating the neurotrophic activities of APP, particularly soluble APP.</text>
</comment>
<comment type="subunit">
    <text evidence="1 23">Homomultimerizes and interacts with various extracellular matrix components such as FN1, LAMA1, LAMA2, NID, ACAN, CSPG2 and type IV collagen. Also interacts with APP and FGB. Interacts with FBLN7 (By similarity). Interacts with CCN3 (PubMed:9927660).</text>
</comment>
<comment type="subunit">
    <text evidence="9">(Microbial infection) Interacts with human papillomavirus/HPV type 16, 18 and 31 proteins E6.</text>
</comment>
<comment type="interaction">
    <interactant intactId="EBI-11956479">
        <id>P23142-4</id>
    </interactant>
    <interactant intactId="EBI-3916527">
        <id>Q9UIJ7</id>
        <label>AK3</label>
    </interactant>
    <organismsDiffer>false</organismsDiffer>
    <experiments>3</experiments>
</comment>
<comment type="interaction">
    <interactant intactId="EBI-11956479">
        <id>P23142-4</id>
    </interactant>
    <interactant intactId="EBI-13064220">
        <id>Q5BKT4</id>
        <label>ALG10</label>
    </interactant>
    <organismsDiffer>false</organismsDiffer>
    <experiments>3</experiments>
</comment>
<comment type="interaction">
    <interactant intactId="EBI-11956479">
        <id>P23142-4</id>
    </interactant>
    <interactant intactId="EBI-77613">
        <id>P05067</id>
        <label>APP</label>
    </interactant>
    <organismsDiffer>false</organismsDiffer>
    <experiments>3</experiments>
</comment>
<comment type="interaction">
    <interactant intactId="EBI-11956479">
        <id>P23142-4</id>
    </interactant>
    <interactant intactId="EBI-946046">
        <id>P54252</id>
        <label>ATXN3</label>
    </interactant>
    <organismsDiffer>false</organismsDiffer>
    <experiments>3</experiments>
</comment>
<comment type="interaction">
    <interactant intactId="EBI-11956479">
        <id>P23142-4</id>
    </interactant>
    <interactant intactId="EBI-741528">
        <id>Q9UKJ5</id>
        <label>CHIC2</label>
    </interactant>
    <organismsDiffer>false</organismsDiffer>
    <experiments>3</experiments>
</comment>
<comment type="interaction">
    <interactant intactId="EBI-11956479">
        <id>P23142-4</id>
    </interactant>
    <interactant intactId="EBI-10192698">
        <id>Q02930-3</id>
        <label>CREB5</label>
    </interactant>
    <organismsDiffer>false</organismsDiffer>
    <experiments>3</experiments>
</comment>
<comment type="interaction">
    <interactant intactId="EBI-11956479">
        <id>P23142-4</id>
    </interactant>
    <interactant intactId="EBI-12175919">
        <id>P42830</id>
        <label>CXCL5</label>
    </interactant>
    <organismsDiffer>false</organismsDiffer>
    <experiments>3</experiments>
</comment>
<comment type="interaction">
    <interactant intactId="EBI-11956479">
        <id>P23142-4</id>
    </interactant>
    <interactant intactId="EBI-740785">
        <id>P49639</id>
        <label>HOXA1</label>
    </interactant>
    <organismsDiffer>false</organismsDiffer>
    <experiments>3</experiments>
</comment>
<comment type="interaction">
    <interactant intactId="EBI-11956479">
        <id>P23142-4</id>
    </interactant>
    <interactant intactId="EBI-1052037">
        <id>Q8IUC1</id>
        <label>KRTAP11-1</label>
    </interactant>
    <organismsDiffer>false</organismsDiffer>
    <experiments>3</experiments>
</comment>
<comment type="interaction">
    <interactant intactId="EBI-11956479">
        <id>P23142-4</id>
    </interactant>
    <interactant intactId="EBI-12196745">
        <id>Q3LHN2</id>
        <label>KRTAP19-2</label>
    </interactant>
    <organismsDiffer>false</organismsDiffer>
    <experiments>3</experiments>
</comment>
<comment type="interaction">
    <interactant intactId="EBI-11956479">
        <id>P23142-4</id>
    </interactant>
    <interactant intactId="EBI-11962058">
        <id>Q5T7P2</id>
        <label>LCE1A</label>
    </interactant>
    <organismsDiffer>false</organismsDiffer>
    <experiments>3</experiments>
</comment>
<comment type="interaction">
    <interactant intactId="EBI-11956479">
        <id>P23142-4</id>
    </interactant>
    <interactant intactId="EBI-10245913">
        <id>Q5T7P3</id>
        <label>LCE1B</label>
    </interactant>
    <organismsDiffer>false</organismsDiffer>
    <experiments>3</experiments>
</comment>
<comment type="interaction">
    <interactant intactId="EBI-11956479">
        <id>P23142-4</id>
    </interactant>
    <interactant intactId="EBI-12224199">
        <id>Q5T751</id>
        <label>LCE1C</label>
    </interactant>
    <organismsDiffer>false</organismsDiffer>
    <experiments>3</experiments>
</comment>
<comment type="interaction">
    <interactant intactId="EBI-11956479">
        <id>P23142-4</id>
    </interactant>
    <interactant intactId="EBI-11958008">
        <id>Q5T754</id>
        <label>LCE1F</label>
    </interactant>
    <organismsDiffer>false</organismsDiffer>
    <experiments>3</experiments>
</comment>
<comment type="interaction">
    <interactant intactId="EBI-11956479">
        <id>P23142-4</id>
    </interactant>
    <interactant intactId="EBI-9394625">
        <id>Q5TA76</id>
        <label>LCE3A</label>
    </interactant>
    <organismsDiffer>false</organismsDiffer>
    <experiments>3</experiments>
</comment>
<comment type="interaction">
    <interactant intactId="EBI-11956479">
        <id>P23142-4</id>
    </interactant>
    <interactant intactId="EBI-11955689">
        <id>Q5TCM9</id>
        <label>LCE5A</label>
    </interactant>
    <organismsDiffer>false</organismsDiffer>
    <experiments>3</experiments>
</comment>
<comment type="interaction">
    <interactant intactId="EBI-11956479">
        <id>P23142-4</id>
    </interactant>
    <interactant intactId="EBI-719955">
        <id>Q96FE5</id>
        <label>LINGO1</label>
    </interactant>
    <organismsDiffer>false</organismsDiffer>
    <experiments>3</experiments>
</comment>
<comment type="interaction">
    <interactant intactId="EBI-11956479">
        <id>P23142-4</id>
    </interactant>
    <interactant intactId="EBI-12028858">
        <id>Q8IXW0</id>
        <label>LMNTD2</label>
    </interactant>
    <organismsDiffer>false</organismsDiffer>
    <experiments>3</experiments>
</comment>
<comment type="interaction">
    <interactant intactId="EBI-11956479">
        <id>P23142-4</id>
    </interactant>
    <interactant intactId="EBI-16439278">
        <id>Q6FHY5</id>
        <label>MEOX2</label>
    </interactant>
    <organismsDiffer>false</organismsDiffer>
    <experiments>3</experiments>
</comment>
<comment type="interaction">
    <interactant intactId="EBI-11956479">
        <id>P23142-4</id>
    </interactant>
    <interactant intactId="EBI-358272">
        <id>P52815</id>
        <label>MRPL12</label>
    </interactant>
    <organismsDiffer>false</organismsDiffer>
    <experiments>3</experiments>
</comment>
<comment type="interaction">
    <interactant intactId="EBI-11956479">
        <id>P23142-4</id>
    </interactant>
    <interactant intactId="EBI-296331">
        <id>Q02548</id>
        <label>PAX5</label>
    </interactant>
    <organismsDiffer>false</organismsDiffer>
    <experiments>3</experiments>
</comment>
<comment type="interaction">
    <interactant intactId="EBI-11956479">
        <id>P23142-4</id>
    </interactant>
    <interactant intactId="EBI-3907610">
        <id>Q8N2U9</id>
        <label>SLC66A2</label>
    </interactant>
    <organismsDiffer>false</organismsDiffer>
    <experiments>3</experiments>
</comment>
<comment type="interaction">
    <interactant intactId="EBI-11956479">
        <id>P23142-4</id>
    </interactant>
    <interactant intactId="EBI-3866665">
        <id>O43609</id>
        <label>SPRY1</label>
    </interactant>
    <organismsDiffer>false</organismsDiffer>
    <experiments>3</experiments>
</comment>
<comment type="interaction">
    <interactant intactId="EBI-11956479">
        <id>P23142-4</id>
    </interactant>
    <interactant intactId="EBI-5235829">
        <id>Q8IWZ5</id>
        <label>TRIM42</label>
    </interactant>
    <organismsDiffer>false</organismsDiffer>
    <experiments>3</experiments>
</comment>
<comment type="interaction">
    <interactant intactId="EBI-11956479">
        <id>P23142-4</id>
    </interactant>
    <interactant intactId="EBI-12817837">
        <id>Q9H9P5-5</id>
        <label>UNKL</label>
    </interactant>
    <organismsDiffer>false</organismsDiffer>
    <experiments>3</experiments>
</comment>
<comment type="subcellular location">
    <subcellularLocation>
        <location>Secreted</location>
        <location>Extracellular space</location>
        <location>Extracellular matrix</location>
    </subcellularLocation>
</comment>
<comment type="alternative products">
    <event type="alternative splicing"/>
    <isoform>
        <id>P23142-1</id>
        <name>D</name>
        <sequence type="displayed"/>
    </isoform>
    <isoform>
        <id>P23142-2</id>
        <name>A</name>
        <sequence type="described" ref="VSP_001383"/>
    </isoform>
    <isoform>
        <id>P23142-3</id>
        <name>B</name>
        <sequence type="described" ref="VSP_001384"/>
    </isoform>
    <isoform>
        <id>P23142-4</id>
        <name>C</name>
        <sequence type="described" ref="VSP_001385"/>
    </isoform>
</comment>
<comment type="tissue specificity">
    <text evidence="19">Isoform A and isoform B are only expressed in placenta. Isoform C and isoform D are expressed in a variety of tissues and cultured cells.</text>
</comment>
<comment type="developmental stage">
    <text evidence="18">Widely expressed during embryonic development. Prominent in the matrix of the leptomeningeal anlage, in basement membranes of the neuroepithelium and the perineurium of peripheral nerves. In embryos of gestational week (gw) 4, staining was observed in the early mesenchymal bone anlagen. In gw 6.5 and 8, all perichondrial structures showed expression but the chondrocytes themselves showed no staining. In gw 10, expression is prominent in the interterritorial matrix surrounding the hypertrophic chondrocytes.</text>
</comment>
<comment type="induction">
    <text evidence="8 17 22">Expression increased by estrogen in ovarian cancer cells.</text>
</comment>
<comment type="disease">
    <text evidence="7">A chromosomal aberration involving FBLN1 is found in a complex type of synpolydactyly referred to as 3/3-prime/4 synpolydactyly associated with metacarpal and metatarsal synostoses. Reciprocal translocation t(12;22)(p11.2;q13.3) with RASSF8. Fibroblasts derived from a patient with synpolydactyly displayed alterations in the level of isoform D splice variant incorporated into the ECM and secreted into the conditioned culture medium. By contrast, the expression of isoform C was not perturbed in the patients fibroblasts. Furthermore, no aberrant polypeptides were detected in extracts of cultured patients fibroblasts. The translocation t(12;22) may result in haploinsufficiency of the isoform D splice variant, which could lead to the observed limb malformation.</text>
</comment>
<comment type="disease">
    <text evidence="10">Elevated expression and altered processing of FBLN1 protein is associated with human breast cancer.</text>
</comment>
<comment type="similarity">
    <text evidence="27">Belongs to the fibulin family.</text>
</comment>
<comment type="sequence caution" evidence="27">
    <conflict type="frameshift">
        <sequence resource="EMBL-CDS" id="AAG17241"/>
    </conflict>
</comment>
<comment type="online information" name="Atlas of Genetics and Cytogenetics in Oncology and Haematology">
    <link uri="https://atlasgeneticsoncology.org/gene/44462/FBLN1"/>
</comment>
<dbReference type="EMBL" id="X53741">
    <property type="protein sequence ID" value="CAA37770.1"/>
    <property type="molecule type" value="mRNA"/>
</dbReference>
<dbReference type="EMBL" id="X53742">
    <property type="protein sequence ID" value="CAA37771.1"/>
    <property type="molecule type" value="mRNA"/>
</dbReference>
<dbReference type="EMBL" id="X53743">
    <property type="protein sequence ID" value="CAA37772.1"/>
    <property type="molecule type" value="mRNA"/>
</dbReference>
<dbReference type="EMBL" id="U01244">
    <property type="protein sequence ID" value="AAB17099.1"/>
    <property type="molecule type" value="mRNA"/>
</dbReference>
<dbReference type="EMBL" id="AF126110">
    <property type="protein sequence ID" value="AAK37822.1"/>
    <property type="molecule type" value="mRNA"/>
</dbReference>
<dbReference type="EMBL" id="AF217999">
    <property type="protein sequence ID" value="AAG17241.1"/>
    <property type="status" value="ALT_FRAME"/>
    <property type="molecule type" value="mRNA"/>
</dbReference>
<dbReference type="EMBL" id="AL021391">
    <property type="status" value="NOT_ANNOTATED_CDS"/>
    <property type="molecule type" value="Genomic_DNA"/>
</dbReference>
<dbReference type="EMBL" id="Z95331">
    <property type="status" value="NOT_ANNOTATED_CDS"/>
    <property type="molecule type" value="Genomic_DNA"/>
</dbReference>
<dbReference type="EMBL" id="Z98047">
    <property type="status" value="NOT_ANNOTATED_CDS"/>
    <property type="molecule type" value="Genomic_DNA"/>
</dbReference>
<dbReference type="EMBL" id="BC022497">
    <property type="protein sequence ID" value="AAH22497.1"/>
    <property type="molecule type" value="mRNA"/>
</dbReference>
<dbReference type="EMBL" id="AY040589">
    <property type="protein sequence ID" value="AAK82945.1"/>
    <property type="molecule type" value="Genomic_DNA"/>
</dbReference>
<dbReference type="CCDS" id="CCDS14067.1">
    <molecule id="P23142-1"/>
</dbReference>
<dbReference type="CCDS" id="CCDS14068.1">
    <molecule id="P23142-3"/>
</dbReference>
<dbReference type="CCDS" id="CCDS14069.1">
    <molecule id="P23142-4"/>
</dbReference>
<dbReference type="CCDS" id="CCDS43028.1">
    <molecule id="P23142-2"/>
</dbReference>
<dbReference type="PIR" id="C36346">
    <property type="entry name" value="C36346"/>
</dbReference>
<dbReference type="RefSeq" id="NP_001987.2">
    <molecule id="P23142-4"/>
    <property type="nucleotide sequence ID" value="NM_001996.3"/>
</dbReference>
<dbReference type="RefSeq" id="NP_006476.2">
    <molecule id="P23142-3"/>
    <property type="nucleotide sequence ID" value="NM_006485.3"/>
</dbReference>
<dbReference type="RefSeq" id="NP_006477.2">
    <molecule id="P23142-1"/>
    <property type="nucleotide sequence ID" value="NM_006486.2"/>
</dbReference>
<dbReference type="RefSeq" id="NP_006478.2">
    <molecule id="P23142-2"/>
    <property type="nucleotide sequence ID" value="NM_006487.2"/>
</dbReference>
<dbReference type="BioGRID" id="108486">
    <property type="interactions" value="136"/>
</dbReference>
<dbReference type="FunCoup" id="P23142">
    <property type="interactions" value="752"/>
</dbReference>
<dbReference type="IntAct" id="P23142">
    <property type="interactions" value="106"/>
</dbReference>
<dbReference type="MINT" id="P23142"/>
<dbReference type="STRING" id="9606.ENSP00000331544"/>
<dbReference type="GlyConnect" id="1244">
    <property type="glycosylation" value="8 N-Linked glycans (2 sites)"/>
</dbReference>
<dbReference type="GlyCosmos" id="P23142">
    <property type="glycosylation" value="4 sites, 9 glycans"/>
</dbReference>
<dbReference type="GlyGen" id="P23142">
    <property type="glycosylation" value="5 sites, 51 N-linked glycans (3 sites), 2 O-linked glycans (2 sites)"/>
</dbReference>
<dbReference type="iPTMnet" id="P23142"/>
<dbReference type="PhosphoSitePlus" id="P23142"/>
<dbReference type="BioMuta" id="FBLN1"/>
<dbReference type="DMDM" id="215274249"/>
<dbReference type="CPTAC" id="non-CPTAC-1123"/>
<dbReference type="jPOST" id="P23142"/>
<dbReference type="MassIVE" id="P23142"/>
<dbReference type="PaxDb" id="9606-ENSP00000331544"/>
<dbReference type="PeptideAtlas" id="P23142"/>
<dbReference type="ProteomicsDB" id="2960"/>
<dbReference type="ProteomicsDB" id="54057">
    <molecule id="P23142-1"/>
</dbReference>
<dbReference type="ProteomicsDB" id="54058">
    <molecule id="P23142-2"/>
</dbReference>
<dbReference type="ProteomicsDB" id="54059">
    <molecule id="P23142-3"/>
</dbReference>
<dbReference type="ProteomicsDB" id="54060">
    <molecule id="P23142-4"/>
</dbReference>
<dbReference type="Pumba" id="P23142"/>
<dbReference type="Antibodypedia" id="886">
    <property type="antibodies" value="328 antibodies from 34 providers"/>
</dbReference>
<dbReference type="DNASU" id="2192"/>
<dbReference type="Ensembl" id="ENST00000262722.11">
    <molecule id="P23142-4"/>
    <property type="protein sequence ID" value="ENSP00000262722.7"/>
    <property type="gene ID" value="ENSG00000077942.19"/>
</dbReference>
<dbReference type="Ensembl" id="ENST00000327858.11">
    <molecule id="P23142-1"/>
    <property type="protein sequence ID" value="ENSP00000331544.6"/>
    <property type="gene ID" value="ENSG00000077942.19"/>
</dbReference>
<dbReference type="Ensembl" id="ENST00000340923.9">
    <molecule id="P23142-2"/>
    <property type="protein sequence ID" value="ENSP00000342212.5"/>
    <property type="gene ID" value="ENSG00000077942.19"/>
</dbReference>
<dbReference type="Ensembl" id="ENST00000442170.6">
    <molecule id="P23142-3"/>
    <property type="protein sequence ID" value="ENSP00000393812.2"/>
    <property type="gene ID" value="ENSG00000077942.19"/>
</dbReference>
<dbReference type="GeneID" id="2192"/>
<dbReference type="KEGG" id="hsa:2192"/>
<dbReference type="MANE-Select" id="ENST00000327858.11">
    <property type="protein sequence ID" value="ENSP00000331544.6"/>
    <property type="RefSeq nucleotide sequence ID" value="NM_006486.3"/>
    <property type="RefSeq protein sequence ID" value="NP_006477.3"/>
</dbReference>
<dbReference type="UCSC" id="uc003bgg.2">
    <molecule id="P23142-1"/>
    <property type="organism name" value="human"/>
</dbReference>
<dbReference type="AGR" id="HGNC:3600"/>
<dbReference type="CTD" id="2192"/>
<dbReference type="DisGeNET" id="2192"/>
<dbReference type="GeneCards" id="FBLN1"/>
<dbReference type="HGNC" id="HGNC:3600">
    <property type="gene designation" value="FBLN1"/>
</dbReference>
<dbReference type="HPA" id="ENSG00000077942">
    <property type="expression patterns" value="Tissue enhanced (choroid)"/>
</dbReference>
<dbReference type="MalaCards" id="FBLN1"/>
<dbReference type="MIM" id="135820">
    <property type="type" value="gene"/>
</dbReference>
<dbReference type="MIM" id="608180">
    <property type="type" value="phenotype"/>
</dbReference>
<dbReference type="neXtProt" id="NX_P23142"/>
<dbReference type="OpenTargets" id="ENSG00000077942"/>
<dbReference type="Orphanet" id="404451">
    <property type="disease" value="FBLN1-related developmental delay-central nervous system anomaly-syndactyly syndrome"/>
</dbReference>
<dbReference type="Orphanet" id="295197">
    <property type="disease" value="Synpolydactyly type 2"/>
</dbReference>
<dbReference type="PharmGKB" id="PA28013"/>
<dbReference type="VEuPathDB" id="HostDB:ENSG00000077942"/>
<dbReference type="eggNOG" id="KOG1217">
    <property type="taxonomic scope" value="Eukaryota"/>
</dbReference>
<dbReference type="GeneTree" id="ENSGT00940000156642"/>
<dbReference type="HOGENOM" id="CLU_004826_1_1_1"/>
<dbReference type="InParanoid" id="P23142"/>
<dbReference type="OMA" id="RITSYHL"/>
<dbReference type="OrthoDB" id="4062651at2759"/>
<dbReference type="PAN-GO" id="P23142">
    <property type="GO annotations" value="0 GO annotations based on evolutionary models"/>
</dbReference>
<dbReference type="PhylomeDB" id="P23142"/>
<dbReference type="TreeFam" id="TF317514"/>
<dbReference type="PathwayCommons" id="P23142"/>
<dbReference type="Reactome" id="R-HSA-2129379">
    <property type="pathway name" value="Molecules associated with elastic fibres"/>
</dbReference>
<dbReference type="SignaLink" id="P23142"/>
<dbReference type="BioGRID-ORCS" id="2192">
    <property type="hits" value="10 hits in 1147 CRISPR screens"/>
</dbReference>
<dbReference type="ChiTaRS" id="FBLN1">
    <property type="organism name" value="human"/>
</dbReference>
<dbReference type="GeneWiki" id="FBLN1"/>
<dbReference type="GenomeRNAi" id="2192"/>
<dbReference type="Pharos" id="P23142">
    <property type="development level" value="Tbio"/>
</dbReference>
<dbReference type="PRO" id="PR:P23142"/>
<dbReference type="Proteomes" id="UP000005640">
    <property type="component" value="Chromosome 22"/>
</dbReference>
<dbReference type="RNAct" id="P23142">
    <property type="molecule type" value="protein"/>
</dbReference>
<dbReference type="Bgee" id="ENSG00000077942">
    <property type="expression patterns" value="Expressed in endocervix and 192 other cell types or tissues"/>
</dbReference>
<dbReference type="ExpressionAtlas" id="P23142">
    <property type="expression patterns" value="baseline and differential"/>
</dbReference>
<dbReference type="GO" id="GO:0005604">
    <property type="term" value="C:basement membrane"/>
    <property type="evidence" value="ECO:0007669"/>
    <property type="project" value="Ensembl"/>
</dbReference>
<dbReference type="GO" id="GO:0062023">
    <property type="term" value="C:collagen-containing extracellular matrix"/>
    <property type="evidence" value="ECO:0007005"/>
    <property type="project" value="BHF-UCL"/>
</dbReference>
<dbReference type="GO" id="GO:0071953">
    <property type="term" value="C:elastic fiber"/>
    <property type="evidence" value="ECO:0000314"/>
    <property type="project" value="UniProtKB"/>
</dbReference>
<dbReference type="GO" id="GO:0070062">
    <property type="term" value="C:extracellular exosome"/>
    <property type="evidence" value="ECO:0007005"/>
    <property type="project" value="UniProtKB"/>
</dbReference>
<dbReference type="GO" id="GO:0031012">
    <property type="term" value="C:extracellular matrix"/>
    <property type="evidence" value="ECO:0000314"/>
    <property type="project" value="UniProtKB"/>
</dbReference>
<dbReference type="GO" id="GO:0005576">
    <property type="term" value="C:extracellular region"/>
    <property type="evidence" value="ECO:0007005"/>
    <property type="project" value="BHF-UCL"/>
</dbReference>
<dbReference type="GO" id="GO:0005615">
    <property type="term" value="C:extracellular space"/>
    <property type="evidence" value="ECO:0000314"/>
    <property type="project" value="UniProtKB"/>
</dbReference>
<dbReference type="GO" id="GO:0005509">
    <property type="term" value="F:calcium ion binding"/>
    <property type="evidence" value="ECO:0000314"/>
    <property type="project" value="UniProtKB"/>
</dbReference>
<dbReference type="GO" id="GO:0005201">
    <property type="term" value="F:extracellular matrix structural constituent"/>
    <property type="evidence" value="ECO:0000314"/>
    <property type="project" value="UniProtKB"/>
</dbReference>
<dbReference type="GO" id="GO:0070051">
    <property type="term" value="F:fibrinogen binding"/>
    <property type="evidence" value="ECO:0000353"/>
    <property type="project" value="UniProtKB"/>
</dbReference>
<dbReference type="GO" id="GO:0001968">
    <property type="term" value="F:fibronectin binding"/>
    <property type="evidence" value="ECO:0000353"/>
    <property type="project" value="UniProtKB"/>
</dbReference>
<dbReference type="GO" id="GO:0042802">
    <property type="term" value="F:identical protein binding"/>
    <property type="evidence" value="ECO:0000314"/>
    <property type="project" value="UniProtKB"/>
</dbReference>
<dbReference type="GO" id="GO:0005178">
    <property type="term" value="F:integrin binding"/>
    <property type="evidence" value="ECO:0000314"/>
    <property type="project" value="UniProtKB"/>
</dbReference>
<dbReference type="GO" id="GO:0016504">
    <property type="term" value="F:peptidase activator activity"/>
    <property type="evidence" value="ECO:0007669"/>
    <property type="project" value="Ensembl"/>
</dbReference>
<dbReference type="GO" id="GO:0044877">
    <property type="term" value="F:protein-containing complex binding"/>
    <property type="evidence" value="ECO:0000353"/>
    <property type="project" value="UniProtKB"/>
</dbReference>
<dbReference type="GO" id="GO:0072378">
    <property type="term" value="P:blood coagulation, fibrin clot formation"/>
    <property type="evidence" value="ECO:0000314"/>
    <property type="project" value="UniProtKB"/>
</dbReference>
<dbReference type="GO" id="GO:0007566">
    <property type="term" value="P:embryo implantation"/>
    <property type="evidence" value="ECO:0007669"/>
    <property type="project" value="Ensembl"/>
</dbReference>
<dbReference type="GO" id="GO:0030198">
    <property type="term" value="P:extracellular matrix organization"/>
    <property type="evidence" value="ECO:0007669"/>
    <property type="project" value="Ensembl"/>
</dbReference>
<dbReference type="GO" id="GO:0007162">
    <property type="term" value="P:negative regulation of cell adhesion"/>
    <property type="evidence" value="ECO:0000314"/>
    <property type="project" value="UniProtKB"/>
</dbReference>
<dbReference type="GO" id="GO:2000146">
    <property type="term" value="P:negative regulation of cell motility"/>
    <property type="evidence" value="ECO:0000314"/>
    <property type="project" value="UniProtKB"/>
</dbReference>
<dbReference type="GO" id="GO:0070373">
    <property type="term" value="P:negative regulation of ERK1 and ERK2 cascade"/>
    <property type="evidence" value="ECO:0000314"/>
    <property type="project" value="UniProtKB"/>
</dbReference>
<dbReference type="GO" id="GO:0001933">
    <property type="term" value="P:negative regulation of protein phosphorylation"/>
    <property type="evidence" value="ECO:0000314"/>
    <property type="project" value="UniProtKB"/>
</dbReference>
<dbReference type="GO" id="GO:2000647">
    <property type="term" value="P:negative regulation of stem cell proliferation"/>
    <property type="evidence" value="ECO:0000314"/>
    <property type="project" value="UniProtKB"/>
</dbReference>
<dbReference type="GO" id="GO:1900025">
    <property type="term" value="P:negative regulation of substrate adhesion-dependent cell spreading"/>
    <property type="evidence" value="ECO:0000314"/>
    <property type="project" value="UniProtKB"/>
</dbReference>
<dbReference type="GO" id="GO:1904188">
    <property type="term" value="P:negative regulation of transformation of host cell by virus"/>
    <property type="evidence" value="ECO:0000315"/>
    <property type="project" value="UniProtKB"/>
</dbReference>
<dbReference type="GO" id="GO:0071635">
    <property type="term" value="P:negative regulation of transforming growth factor beta production"/>
    <property type="evidence" value="ECO:0000314"/>
    <property type="project" value="UniProtKB"/>
</dbReference>
<dbReference type="GO" id="GO:0048146">
    <property type="term" value="P:positive regulation of fibroblast proliferation"/>
    <property type="evidence" value="ECO:0000314"/>
    <property type="project" value="UniProtKB"/>
</dbReference>
<dbReference type="GO" id="GO:0010628">
    <property type="term" value="P:positive regulation of gene expression"/>
    <property type="evidence" value="ECO:0000314"/>
    <property type="project" value="UniProtKB"/>
</dbReference>
<dbReference type="GO" id="GO:1904237">
    <property type="term" value="P:positive regulation of substrate-dependent cell migration, cell attachment to substrate"/>
    <property type="evidence" value="ECO:0000314"/>
    <property type="project" value="UniProtKB"/>
</dbReference>
<dbReference type="CDD" id="cd00017">
    <property type="entry name" value="ANATO"/>
    <property type="match status" value="2"/>
</dbReference>
<dbReference type="CDD" id="cd00054">
    <property type="entry name" value="EGF_CA"/>
    <property type="match status" value="4"/>
</dbReference>
<dbReference type="FunFam" id="2.10.25.10:FF:000341">
    <property type="entry name" value="Fibulin 2"/>
    <property type="match status" value="1"/>
</dbReference>
<dbReference type="FunFam" id="2.10.25.10:FF:000078">
    <property type="entry name" value="Fibulin-1"/>
    <property type="match status" value="1"/>
</dbReference>
<dbReference type="FunFam" id="2.10.25.10:FF:000104">
    <property type="entry name" value="Fibulin-1"/>
    <property type="match status" value="1"/>
</dbReference>
<dbReference type="FunFam" id="2.10.25.10:FF:000108">
    <property type="entry name" value="Fibulin-1"/>
    <property type="match status" value="1"/>
</dbReference>
<dbReference type="FunFam" id="2.10.25.10:FF:000139">
    <property type="entry name" value="Fibulin-1"/>
    <property type="match status" value="1"/>
</dbReference>
<dbReference type="FunFam" id="2.10.25.10:FF:000150">
    <property type="entry name" value="Fibulin-1"/>
    <property type="match status" value="1"/>
</dbReference>
<dbReference type="FunFam" id="2.10.25.10:FF:000241">
    <property type="entry name" value="Fibulin-1"/>
    <property type="match status" value="1"/>
</dbReference>
<dbReference type="FunFam" id="2.10.25.10:FF:000257">
    <property type="entry name" value="Fibulin-1"/>
    <property type="match status" value="1"/>
</dbReference>
<dbReference type="FunFam" id="2.10.25.10:FF:000010">
    <property type="entry name" value="Pro-epidermal growth factor"/>
    <property type="match status" value="1"/>
</dbReference>
<dbReference type="Gene3D" id="2.10.25.10">
    <property type="entry name" value="Laminin"/>
    <property type="match status" value="9"/>
</dbReference>
<dbReference type="InterPro" id="IPR000020">
    <property type="entry name" value="Anaphylatoxin/fibulin"/>
</dbReference>
<dbReference type="InterPro" id="IPR026823">
    <property type="entry name" value="cEGF"/>
</dbReference>
<dbReference type="InterPro" id="IPR001881">
    <property type="entry name" value="EGF-like_Ca-bd_dom"/>
</dbReference>
<dbReference type="InterPro" id="IPR000742">
    <property type="entry name" value="EGF-like_dom"/>
</dbReference>
<dbReference type="InterPro" id="IPR000152">
    <property type="entry name" value="EGF-type_Asp/Asn_hydroxyl_site"/>
</dbReference>
<dbReference type="InterPro" id="IPR018097">
    <property type="entry name" value="EGF_Ca-bd_CS"/>
</dbReference>
<dbReference type="InterPro" id="IPR017048">
    <property type="entry name" value="Fibulin-1"/>
</dbReference>
<dbReference type="InterPro" id="IPR055088">
    <property type="entry name" value="Fibulin_C"/>
</dbReference>
<dbReference type="InterPro" id="IPR009030">
    <property type="entry name" value="Growth_fac_rcpt_cys_sf"/>
</dbReference>
<dbReference type="InterPro" id="IPR052235">
    <property type="entry name" value="Nephronectin_domain"/>
</dbReference>
<dbReference type="InterPro" id="IPR049883">
    <property type="entry name" value="NOTCH1_EGF-like"/>
</dbReference>
<dbReference type="PANTHER" id="PTHR24050:SF27">
    <property type="entry name" value="FIBRILLIN-1"/>
    <property type="match status" value="1"/>
</dbReference>
<dbReference type="PANTHER" id="PTHR24050">
    <property type="entry name" value="PA14 DOMAIN-CONTAINING PROTEIN"/>
    <property type="match status" value="1"/>
</dbReference>
<dbReference type="Pfam" id="PF01821">
    <property type="entry name" value="ANATO"/>
    <property type="match status" value="2"/>
</dbReference>
<dbReference type="Pfam" id="PF12662">
    <property type="entry name" value="cEGF"/>
    <property type="match status" value="3"/>
</dbReference>
<dbReference type="Pfam" id="PF07645">
    <property type="entry name" value="EGF_CA"/>
    <property type="match status" value="4"/>
</dbReference>
<dbReference type="Pfam" id="PF22914">
    <property type="entry name" value="Fibulin_C"/>
    <property type="match status" value="1"/>
</dbReference>
<dbReference type="PIRSF" id="PIRSF036313">
    <property type="entry name" value="Fibulin-1"/>
    <property type="match status" value="1"/>
</dbReference>
<dbReference type="SMART" id="SM00104">
    <property type="entry name" value="ANATO"/>
    <property type="match status" value="3"/>
</dbReference>
<dbReference type="SMART" id="SM00181">
    <property type="entry name" value="EGF"/>
    <property type="match status" value="9"/>
</dbReference>
<dbReference type="SMART" id="SM00179">
    <property type="entry name" value="EGF_CA"/>
    <property type="match status" value="8"/>
</dbReference>
<dbReference type="SUPFAM" id="SSF57196">
    <property type="entry name" value="EGF/Laminin"/>
    <property type="match status" value="3"/>
</dbReference>
<dbReference type="SUPFAM" id="SSF57184">
    <property type="entry name" value="Growth factor receptor domain"/>
    <property type="match status" value="2"/>
</dbReference>
<dbReference type="PROSITE" id="PS01177">
    <property type="entry name" value="ANAPHYLATOXIN_1"/>
    <property type="match status" value="3"/>
</dbReference>
<dbReference type="PROSITE" id="PS01178">
    <property type="entry name" value="ANAPHYLATOXIN_2"/>
    <property type="match status" value="3"/>
</dbReference>
<dbReference type="PROSITE" id="PS00010">
    <property type="entry name" value="ASX_HYDROXYL"/>
    <property type="match status" value="4"/>
</dbReference>
<dbReference type="PROSITE" id="PS01186">
    <property type="entry name" value="EGF_2"/>
    <property type="match status" value="3"/>
</dbReference>
<dbReference type="PROSITE" id="PS50026">
    <property type="entry name" value="EGF_3"/>
    <property type="match status" value="5"/>
</dbReference>
<dbReference type="PROSITE" id="PS01187">
    <property type="entry name" value="EGF_CA"/>
    <property type="match status" value="8"/>
</dbReference>